<evidence type="ECO:0000250" key="1"/>
<evidence type="ECO:0000255" key="2"/>
<evidence type="ECO:0000255" key="3">
    <source>
        <dbReference type="PROSITE-ProRule" id="PRU00219"/>
    </source>
</evidence>
<evidence type="ECO:0000255" key="4">
    <source>
        <dbReference type="PROSITE-ProRule" id="PRU00801"/>
    </source>
</evidence>
<evidence type="ECO:0000256" key="5">
    <source>
        <dbReference type="SAM" id="MobiDB-lite"/>
    </source>
</evidence>
<evidence type="ECO:0000269" key="6">
    <source>
    </source>
</evidence>
<evidence type="ECO:0000269" key="7">
    <source>
    </source>
</evidence>
<evidence type="ECO:0000269" key="8">
    <source>
    </source>
</evidence>
<evidence type="ECO:0000269" key="9">
    <source>
    </source>
</evidence>
<evidence type="ECO:0000269" key="10">
    <source>
    </source>
</evidence>
<evidence type="ECO:0000303" key="11">
    <source>
    </source>
</evidence>
<evidence type="ECO:0000303" key="12">
    <source>
    </source>
</evidence>
<evidence type="ECO:0000305" key="13"/>
<sequence>MLLLLGLCLGLSLCVGSQEEAQSWGHSSEQDGLRVPRQVRLLQRLKTKPLMTEFSVKSTIISRYAFTTVSCRMLNRASEDQDIEFQMQIPAAAFITNFTMLIGDKVYQGEITEREKKSGDRVKEKRNKTTEENGEKGTEIFRASAVIPSKDKAAFFLSYEELLQRRLGKYEHSISVRPQQLSGRLSVDVNILESAGIASLEVLPLHNSRQRGSGRGEDDSGPPPSTVINQNETFANIIFKPTVVQQARIAQNGILGDFIIRYDVNREQSIGDIQVLNGYFVHYFAPKDLPPLPKNVVFVLDSSASMVGTKLRQTKDALFTILHDLRPQDRFSIIGFSNRIKVWKDHLISVTPDSIRDGKVYIHHMSPTGGTDINGALQRAIRLLNKYVAHSGIGDRSVSLIVFLTDGKPTVGETHTLKILNNTREAARGQVCIFTIGIGNDVDFRLLEKLSLENCGLTRRVHEEEDAGSQLIGFYDEIRTPLLSDIRIDYPPSSVVQATKTLFPNYFNGSEIIIAGKLVDRKLDHLHVEVTASNSKKFIILKTDVPVRPQKAGKDVTGSPRPGGDGEGDTNHIERLWSYLTTKELLSSWLQSDDEPEKERLRQRAQALAVSYRFLTPFTSMKLRGPVPRMDGLEEAHGMSAAMGPEPVVQSVRGAGTQPGPLLKKPYQPRIKISKTSVDGDPHFVVDFPLSRLTVCFNIDGQPGDILRLVSDHRDSGVTVNGELIGAPAPPNGHKKQRTYLRTITILINKPERSYLEITPSRVILDGGDRLVLPCNQSVVVGSWGLEVSVSANANVTVTIQGSIAFVILIHLYKKPAPFQRHHLGFYIANSEGLSSNCHGLLGQFLNQDARLTEDPAGPSQNLTHPLLLQVGEGPEAVLTVKGHQVPVVWKQRKIYNGEEQIDCWFARNNAAKLIDGEYKDYLAFHPFDTGMTLGQGMSREL</sequence>
<keyword id="KW-0025">Alternative splicing</keyword>
<keyword id="KW-0325">Glycoprotein</keyword>
<keyword id="KW-0646">Protease inhibitor</keyword>
<keyword id="KW-1267">Proteomics identification</keyword>
<keyword id="KW-1185">Reference proteome</keyword>
<keyword id="KW-0964">Secreted</keyword>
<keyword id="KW-0722">Serine protease inhibitor</keyword>
<keyword id="KW-0732">Signal</keyword>
<feature type="signal peptide" evidence="2">
    <location>
        <begin position="1"/>
        <end position="16"/>
    </location>
</feature>
<feature type="chain" id="PRO_0000331408" description="Inter-alpha-trypsin inhibitor heavy chain H5">
    <location>
        <begin position="17"/>
        <end position="942"/>
    </location>
</feature>
<feature type="domain" description="VIT" evidence="4">
    <location>
        <begin position="35"/>
        <end position="161"/>
    </location>
</feature>
<feature type="domain" description="VWFA" evidence="3">
    <location>
        <begin position="295"/>
        <end position="478"/>
    </location>
</feature>
<feature type="region of interest" description="Disordered" evidence="5">
    <location>
        <begin position="116"/>
        <end position="136"/>
    </location>
</feature>
<feature type="region of interest" description="Disordered" evidence="5">
    <location>
        <begin position="208"/>
        <end position="227"/>
    </location>
</feature>
<feature type="region of interest" description="Disordered" evidence="5">
    <location>
        <begin position="550"/>
        <end position="571"/>
    </location>
</feature>
<feature type="glycosylation site" description="N-linked (GlcNAc...) asparagine" evidence="2">
    <location>
        <position position="97"/>
    </location>
</feature>
<feature type="glycosylation site" description="N-linked (GlcNAc...) asparagine" evidence="2">
    <location>
        <position position="127"/>
    </location>
</feature>
<feature type="glycosylation site" description="N-linked (GlcNAc...) asparagine" evidence="2">
    <location>
        <position position="231"/>
    </location>
</feature>
<feature type="glycosylation site" description="N-linked (GlcNAc...) asparagine" evidence="2">
    <location>
        <position position="421"/>
    </location>
</feature>
<feature type="glycosylation site" description="N-linked (GlcNAc...) asparagine" evidence="2">
    <location>
        <position position="508"/>
    </location>
</feature>
<feature type="glycosylation site" description="N-linked (GlcNAc...) asparagine" evidence="2">
    <location>
        <position position="776"/>
    </location>
</feature>
<feature type="glycosylation site" description="N-linked (GlcNAc...) asparagine" evidence="2">
    <location>
        <position position="795"/>
    </location>
</feature>
<feature type="glycosylation site" description="N-linked (GlcNAc...) asparagine" evidence="2">
    <location>
        <position position="862"/>
    </location>
</feature>
<feature type="splice variant" id="VSP_035727" description="In isoform 4." evidence="12">
    <location>
        <begin position="1"/>
        <end position="449"/>
    </location>
</feature>
<feature type="splice variant" id="VSP_033188" description="In isoform 3." evidence="13">
    <location>
        <begin position="1"/>
        <end position="214"/>
    </location>
</feature>
<feature type="splice variant" id="VSP_033189" description="In isoform 3." evidence="13">
    <original>RGED</original>
    <variation>MRNY</variation>
    <location>
        <begin position="215"/>
        <end position="218"/>
    </location>
</feature>
<feature type="splice variant" id="VSP_035728" description="In isoform 4." evidence="12">
    <original>LSLENCGLTRRVHEEEDAGSQLIG</original>
    <variation>MRTYDTPGTSMCIIPDDPHRNPRR</variation>
    <location>
        <begin position="450"/>
        <end position="473"/>
    </location>
</feature>
<feature type="splice variant" id="VSP_033190" description="In isoform 2." evidence="11">
    <original>YQPRIKISKTSVDGDPHFVVDFPLSRLT</original>
    <variation>NSVKKKQNKTKKRHGRDGVFPLHHLGIR</variation>
    <location>
        <begin position="667"/>
        <end position="694"/>
    </location>
</feature>
<feature type="splice variant" id="VSP_035729" description="In isoform 4." evidence="12">
    <original>VDGDPHFVVDFPLSRL</original>
    <variation>GKAKDAVVCGLRVRDV</variation>
    <location>
        <begin position="678"/>
        <end position="693"/>
    </location>
</feature>
<feature type="splice variant" id="VSP_035730" description="In isoform 4." evidence="12">
    <location>
        <begin position="694"/>
        <end position="942"/>
    </location>
</feature>
<feature type="splice variant" id="VSP_033191" description="In isoform 2." evidence="11">
    <location>
        <begin position="695"/>
        <end position="942"/>
    </location>
</feature>
<feature type="sequence variant" id="VAR_042847" description="In dbSNP:rs12761771.">
    <original>E</original>
    <variation>K</variation>
    <location>
        <position position="139"/>
    </location>
</feature>
<feature type="sequence variant" id="VAR_042848" description="In dbSNP:rs36056263.">
    <original>N</original>
    <variation>H</variation>
    <location>
        <position position="207"/>
    </location>
</feature>
<feature type="sequence variant" id="VAR_055973" description="In dbSNP:rs36056263.">
    <original>N</original>
    <variation>H</variation>
    <location>
        <position position="421"/>
    </location>
</feature>
<feature type="sequence variant" id="VAR_061276" description="In dbSNP:rs35892621.">
    <original>V</original>
    <variation>M</variation>
    <location>
        <position position="496"/>
    </location>
</feature>
<feature type="sequence variant" id="VAR_042849" description="In dbSNP:rs2275069." evidence="7 8 9 10">
    <original>T</original>
    <variation>P</variation>
    <location>
        <position position="570"/>
    </location>
</feature>
<feature type="sequence variant" id="VAR_042850" description="In dbSNP:rs34213756.">
    <original>R</original>
    <variation>C</variation>
    <location>
        <position position="629"/>
    </location>
</feature>
<feature type="sequence variant" id="VAR_055974" description="In dbSNP:rs10795551." evidence="6 7">
    <original>F</original>
    <variation>S</variation>
    <location>
        <position position="925"/>
    </location>
</feature>
<feature type="sequence conflict" description="In Ref. 3; BAB55070." evidence="13" ref="3">
    <original>D</original>
    <variation>G</variation>
    <location>
        <position position="188"/>
    </location>
</feature>
<feature type="sequence conflict" description="In Ref. 3; BAB55070." evidence="13" ref="3">
    <original>S</original>
    <variation>P</variation>
    <location>
        <position position="337"/>
    </location>
</feature>
<feature type="sequence conflict" description="In Ref. 8; CAH10363." evidence="13" ref="8">
    <original>W</original>
    <variation>R</variation>
    <location>
        <position position="343"/>
    </location>
</feature>
<feature type="sequence conflict" description="In Ref. 1; AAO49812." evidence="13" ref="1">
    <original>Q</original>
    <variation>R</variation>
    <location>
        <position position="936"/>
    </location>
</feature>
<organism>
    <name type="scientific">Homo sapiens</name>
    <name type="common">Human</name>
    <dbReference type="NCBI Taxonomy" id="9606"/>
    <lineage>
        <taxon>Eukaryota</taxon>
        <taxon>Metazoa</taxon>
        <taxon>Chordata</taxon>
        <taxon>Craniata</taxon>
        <taxon>Vertebrata</taxon>
        <taxon>Euteleostomi</taxon>
        <taxon>Mammalia</taxon>
        <taxon>Eutheria</taxon>
        <taxon>Euarchontoglires</taxon>
        <taxon>Primates</taxon>
        <taxon>Haplorrhini</taxon>
        <taxon>Catarrhini</taxon>
        <taxon>Hominidae</taxon>
        <taxon>Homo</taxon>
    </lineage>
</organism>
<comment type="function">
    <text>May act as a tumor suppressor.</text>
</comment>
<comment type="subcellular location">
    <subcellularLocation>
        <location evidence="1">Secreted</location>
    </subcellularLocation>
</comment>
<comment type="alternative products">
    <event type="alternative splicing"/>
    <isoform>
        <id>Q86UX2-1</id>
        <name>1</name>
        <sequence type="displayed"/>
    </isoform>
    <isoform>
        <id>Q86UX2-2</id>
        <name>2</name>
        <sequence type="described" ref="VSP_033190 VSP_033191"/>
    </isoform>
    <isoform>
        <id>Q86UX2-3</id>
        <name>3</name>
        <sequence type="described" ref="VSP_033188 VSP_033189"/>
    </isoform>
    <isoform>
        <id>Q86UX2-4</id>
        <name>4</name>
        <sequence type="described" ref="VSP_035727 VSP_035728 VSP_035729 VSP_035730"/>
    </isoform>
</comment>
<comment type="tissue specificity">
    <text evidence="8">Abundantly expressed in placenta. Less abundant expression in mammary gland and ovary. Expression is barely detectable levels in all other tissues tested.</text>
</comment>
<comment type="induction">
    <text evidence="8">Down-regulated in breast tumors.</text>
</comment>
<comment type="similarity">
    <text evidence="13">Belongs to the ITIH family.</text>
</comment>
<comment type="caution">
    <text evidence="13">Conflict in position 933 in the human genome assembly due to a frameshift.</text>
</comment>
<comment type="sequence caution" evidence="13">
    <conflict type="frameshift">
        <sequence resource="EMBL-CDS" id="CAI12953"/>
    </conflict>
</comment>
<comment type="sequence caution" evidence="13">
    <conflict type="frameshift">
        <sequence resource="EMBL-CDS" id="CAI12955"/>
    </conflict>
</comment>
<comment type="sequence caution" evidence="13">
    <conflict type="frameshift">
        <sequence resource="EMBL-CDS" id="CAI16360"/>
    </conflict>
</comment>
<comment type="sequence caution" evidence="13">
    <conflict type="frameshift">
        <sequence resource="EMBL-CDS" id="CAI16363"/>
    </conflict>
</comment>
<protein>
    <recommendedName>
        <fullName>Inter-alpha-trypsin inhibitor heavy chain H5</fullName>
        <shortName>ITI heavy chain H5</shortName>
        <shortName>ITI-HC5</shortName>
        <shortName>Inter-alpha-inhibitor heavy chain 5</shortName>
    </recommendedName>
</protein>
<gene>
    <name type="primary">ITIH5</name>
    <name type="synonym">KIAA1953</name>
    <name type="ORF">PP14776</name>
    <name type="ORF">UNQ311/PRO354</name>
</gene>
<reference key="1">
    <citation type="journal article" date="2004" name="Cancer Lett.">
        <title>ITIH5, a novel member of the inter-alpha-trypsin inhibitor heavy chain family is downregulated in breast cancer.</title>
        <authorList>
            <person name="Himmelfarb M."/>
            <person name="Klopocki E."/>
            <person name="Grube S."/>
            <person name="Staub E."/>
            <person name="Klaman I."/>
            <person name="Hinzmann B."/>
            <person name="Kristiansen G."/>
            <person name="Rosenthal A."/>
            <person name="Duerst M."/>
            <person name="Dahl E."/>
        </authorList>
    </citation>
    <scope>NUCLEOTIDE SEQUENCE [MRNA] (ISOFORM 1)</scope>
    <scope>TISSUE SPECIFICITY</scope>
    <scope>INDUCTION</scope>
    <scope>VARIANT PRO-570</scope>
    <source>
        <tissue>Mammary gland</tissue>
    </source>
</reference>
<reference key="2">
    <citation type="journal article" date="2003" name="Genome Res.">
        <title>The secreted protein discovery initiative (SPDI), a large-scale effort to identify novel human secreted and transmembrane proteins: a bioinformatics assessment.</title>
        <authorList>
            <person name="Clark H.F."/>
            <person name="Gurney A.L."/>
            <person name="Abaya E."/>
            <person name="Baker K."/>
            <person name="Baldwin D.T."/>
            <person name="Brush J."/>
            <person name="Chen J."/>
            <person name="Chow B."/>
            <person name="Chui C."/>
            <person name="Crowley C."/>
            <person name="Currell B."/>
            <person name="Deuel B."/>
            <person name="Dowd P."/>
            <person name="Eaton D."/>
            <person name="Foster J.S."/>
            <person name="Grimaldi C."/>
            <person name="Gu Q."/>
            <person name="Hass P.E."/>
            <person name="Heldens S."/>
            <person name="Huang A."/>
            <person name="Kim H.S."/>
            <person name="Klimowski L."/>
            <person name="Jin Y."/>
            <person name="Johnson S."/>
            <person name="Lee J."/>
            <person name="Lewis L."/>
            <person name="Liao D."/>
            <person name="Mark M.R."/>
            <person name="Robbie E."/>
            <person name="Sanchez C."/>
            <person name="Schoenfeld J."/>
            <person name="Seshagiri S."/>
            <person name="Simmons L."/>
            <person name="Singh J."/>
            <person name="Smith V."/>
            <person name="Stinson J."/>
            <person name="Vagts A."/>
            <person name="Vandlen R.L."/>
            <person name="Watanabe C."/>
            <person name="Wieand D."/>
            <person name="Woods K."/>
            <person name="Xie M.-H."/>
            <person name="Yansura D.G."/>
            <person name="Yi S."/>
            <person name="Yu G."/>
            <person name="Yuan J."/>
            <person name="Zhang M."/>
            <person name="Zhang Z."/>
            <person name="Goddard A.D."/>
            <person name="Wood W.I."/>
            <person name="Godowski P.J."/>
            <person name="Gray A.M."/>
        </authorList>
    </citation>
    <scope>NUCLEOTIDE SEQUENCE [LARGE SCALE MRNA] (ISOFORM 2)</scope>
</reference>
<reference key="3">
    <citation type="journal article" date="2004" name="Nat. Genet.">
        <title>Complete sequencing and characterization of 21,243 full-length human cDNAs.</title>
        <authorList>
            <person name="Ota T."/>
            <person name="Suzuki Y."/>
            <person name="Nishikawa T."/>
            <person name="Otsuki T."/>
            <person name="Sugiyama T."/>
            <person name="Irie R."/>
            <person name="Wakamatsu A."/>
            <person name="Hayashi K."/>
            <person name="Sato H."/>
            <person name="Nagai K."/>
            <person name="Kimura K."/>
            <person name="Makita H."/>
            <person name="Sekine M."/>
            <person name="Obayashi M."/>
            <person name="Nishi T."/>
            <person name="Shibahara T."/>
            <person name="Tanaka T."/>
            <person name="Ishii S."/>
            <person name="Yamamoto J."/>
            <person name="Saito K."/>
            <person name="Kawai Y."/>
            <person name="Isono Y."/>
            <person name="Nakamura Y."/>
            <person name="Nagahari K."/>
            <person name="Murakami K."/>
            <person name="Yasuda T."/>
            <person name="Iwayanagi T."/>
            <person name="Wagatsuma M."/>
            <person name="Shiratori A."/>
            <person name="Sudo H."/>
            <person name="Hosoiri T."/>
            <person name="Kaku Y."/>
            <person name="Kodaira H."/>
            <person name="Kondo H."/>
            <person name="Sugawara M."/>
            <person name="Takahashi M."/>
            <person name="Kanda K."/>
            <person name="Yokoi T."/>
            <person name="Furuya T."/>
            <person name="Kikkawa E."/>
            <person name="Omura Y."/>
            <person name="Abe K."/>
            <person name="Kamihara K."/>
            <person name="Katsuta N."/>
            <person name="Sato K."/>
            <person name="Tanikawa M."/>
            <person name="Yamazaki M."/>
            <person name="Ninomiya K."/>
            <person name="Ishibashi T."/>
            <person name="Yamashita H."/>
            <person name="Murakawa K."/>
            <person name="Fujimori K."/>
            <person name="Tanai H."/>
            <person name="Kimata M."/>
            <person name="Watanabe M."/>
            <person name="Hiraoka S."/>
            <person name="Chiba Y."/>
            <person name="Ishida S."/>
            <person name="Ono Y."/>
            <person name="Takiguchi S."/>
            <person name="Watanabe S."/>
            <person name="Yosida M."/>
            <person name="Hotuta T."/>
            <person name="Kusano J."/>
            <person name="Kanehori K."/>
            <person name="Takahashi-Fujii A."/>
            <person name="Hara H."/>
            <person name="Tanase T.-O."/>
            <person name="Nomura Y."/>
            <person name="Togiya S."/>
            <person name="Komai F."/>
            <person name="Hara R."/>
            <person name="Takeuchi K."/>
            <person name="Arita M."/>
            <person name="Imose N."/>
            <person name="Musashino K."/>
            <person name="Yuuki H."/>
            <person name="Oshima A."/>
            <person name="Sasaki N."/>
            <person name="Aotsuka S."/>
            <person name="Yoshikawa Y."/>
            <person name="Matsunawa H."/>
            <person name="Ichihara T."/>
            <person name="Shiohata N."/>
            <person name="Sano S."/>
            <person name="Moriya S."/>
            <person name="Momiyama H."/>
            <person name="Satoh N."/>
            <person name="Takami S."/>
            <person name="Terashima Y."/>
            <person name="Suzuki O."/>
            <person name="Nakagawa S."/>
            <person name="Senoh A."/>
            <person name="Mizoguchi H."/>
            <person name="Goto Y."/>
            <person name="Shimizu F."/>
            <person name="Wakebe H."/>
            <person name="Hishigaki H."/>
            <person name="Watanabe T."/>
            <person name="Sugiyama A."/>
            <person name="Takemoto M."/>
            <person name="Kawakami B."/>
            <person name="Yamazaki M."/>
            <person name="Watanabe K."/>
            <person name="Kumagai A."/>
            <person name="Itakura S."/>
            <person name="Fukuzumi Y."/>
            <person name="Fujimori Y."/>
            <person name="Komiyama M."/>
            <person name="Tashiro H."/>
            <person name="Tanigami A."/>
            <person name="Fujiwara T."/>
            <person name="Ono T."/>
            <person name="Yamada K."/>
            <person name="Fujii Y."/>
            <person name="Ozaki K."/>
            <person name="Hirao M."/>
            <person name="Ohmori Y."/>
            <person name="Kawabata A."/>
            <person name="Hikiji T."/>
            <person name="Kobatake N."/>
            <person name="Inagaki H."/>
            <person name="Ikema Y."/>
            <person name="Okamoto S."/>
            <person name="Okitani R."/>
            <person name="Kawakami T."/>
            <person name="Noguchi S."/>
            <person name="Itoh T."/>
            <person name="Shigeta K."/>
            <person name="Senba T."/>
            <person name="Matsumura K."/>
            <person name="Nakajima Y."/>
            <person name="Mizuno T."/>
            <person name="Morinaga M."/>
            <person name="Sasaki M."/>
            <person name="Togashi T."/>
            <person name="Oyama M."/>
            <person name="Hata H."/>
            <person name="Watanabe M."/>
            <person name="Komatsu T."/>
            <person name="Mizushima-Sugano J."/>
            <person name="Satoh T."/>
            <person name="Shirai Y."/>
            <person name="Takahashi Y."/>
            <person name="Nakagawa K."/>
            <person name="Okumura K."/>
            <person name="Nagase T."/>
            <person name="Nomura N."/>
            <person name="Kikuchi H."/>
            <person name="Masuho Y."/>
            <person name="Yamashita R."/>
            <person name="Nakai K."/>
            <person name="Yada T."/>
            <person name="Nakamura Y."/>
            <person name="Ohara O."/>
            <person name="Isogai T."/>
            <person name="Sugano S."/>
        </authorList>
    </citation>
    <scope>NUCLEOTIDE SEQUENCE [LARGE SCALE MRNA]</scope>
    <scope>VARIANTS PRO-570 AND SER-925</scope>
    <source>
        <tissue>Mammary gland</tissue>
    </source>
</reference>
<reference key="4">
    <citation type="journal article" date="2004" name="Proc. Natl. Acad. Sci. U.S.A.">
        <title>Large-scale cDNA transfection screening for genes related to cancer development and progression.</title>
        <authorList>
            <person name="Wan D."/>
            <person name="Gong Y."/>
            <person name="Qin W."/>
            <person name="Zhang P."/>
            <person name="Li J."/>
            <person name="Wei L."/>
            <person name="Zhou X."/>
            <person name="Li H."/>
            <person name="Qiu X."/>
            <person name="Zhong F."/>
            <person name="He L."/>
            <person name="Yu J."/>
            <person name="Yao G."/>
            <person name="Jiang H."/>
            <person name="Qian L."/>
            <person name="Yu Y."/>
            <person name="Shu H."/>
            <person name="Chen X."/>
            <person name="Xu H."/>
            <person name="Guo M."/>
            <person name="Pan Z."/>
            <person name="Chen Y."/>
            <person name="Ge C."/>
            <person name="Yang S."/>
            <person name="Gu J."/>
        </authorList>
    </citation>
    <scope>NUCLEOTIDE SEQUENCE [LARGE SCALE MRNA] (ISOFORM 4)</scope>
    <scope>VARIANT PRO-570</scope>
</reference>
<reference key="5">
    <citation type="journal article" date="2004" name="Nature">
        <title>The DNA sequence and comparative analysis of human chromosome 10.</title>
        <authorList>
            <person name="Deloukas P."/>
            <person name="Earthrowl M.E."/>
            <person name="Grafham D.V."/>
            <person name="Rubenfield M."/>
            <person name="French L."/>
            <person name="Steward C.A."/>
            <person name="Sims S.K."/>
            <person name="Jones M.C."/>
            <person name="Searle S."/>
            <person name="Scott C."/>
            <person name="Howe K."/>
            <person name="Hunt S.E."/>
            <person name="Andrews T.D."/>
            <person name="Gilbert J.G.R."/>
            <person name="Swarbreck D."/>
            <person name="Ashurst J.L."/>
            <person name="Taylor A."/>
            <person name="Battles J."/>
            <person name="Bird C.P."/>
            <person name="Ainscough R."/>
            <person name="Almeida J.P."/>
            <person name="Ashwell R.I.S."/>
            <person name="Ambrose K.D."/>
            <person name="Babbage A.K."/>
            <person name="Bagguley C.L."/>
            <person name="Bailey J."/>
            <person name="Banerjee R."/>
            <person name="Bates K."/>
            <person name="Beasley H."/>
            <person name="Bray-Allen S."/>
            <person name="Brown A.J."/>
            <person name="Brown J.Y."/>
            <person name="Burford D.C."/>
            <person name="Burrill W."/>
            <person name="Burton J."/>
            <person name="Cahill P."/>
            <person name="Camire D."/>
            <person name="Carter N.P."/>
            <person name="Chapman J.C."/>
            <person name="Clark S.Y."/>
            <person name="Clarke G."/>
            <person name="Clee C.M."/>
            <person name="Clegg S."/>
            <person name="Corby N."/>
            <person name="Coulson A."/>
            <person name="Dhami P."/>
            <person name="Dutta I."/>
            <person name="Dunn M."/>
            <person name="Faulkner L."/>
            <person name="Frankish A."/>
            <person name="Frankland J.A."/>
            <person name="Garner P."/>
            <person name="Garnett J."/>
            <person name="Gribble S."/>
            <person name="Griffiths C."/>
            <person name="Grocock R."/>
            <person name="Gustafson E."/>
            <person name="Hammond S."/>
            <person name="Harley J.L."/>
            <person name="Hart E."/>
            <person name="Heath P.D."/>
            <person name="Ho T.P."/>
            <person name="Hopkins B."/>
            <person name="Horne J."/>
            <person name="Howden P.J."/>
            <person name="Huckle E."/>
            <person name="Hynds C."/>
            <person name="Johnson C."/>
            <person name="Johnson D."/>
            <person name="Kana A."/>
            <person name="Kay M."/>
            <person name="Kimberley A.M."/>
            <person name="Kershaw J.K."/>
            <person name="Kokkinaki M."/>
            <person name="Laird G.K."/>
            <person name="Lawlor S."/>
            <person name="Lee H.M."/>
            <person name="Leongamornlert D.A."/>
            <person name="Laird G."/>
            <person name="Lloyd C."/>
            <person name="Lloyd D.M."/>
            <person name="Loveland J."/>
            <person name="Lovell J."/>
            <person name="McLaren S."/>
            <person name="McLay K.E."/>
            <person name="McMurray A."/>
            <person name="Mashreghi-Mohammadi M."/>
            <person name="Matthews L."/>
            <person name="Milne S."/>
            <person name="Nickerson T."/>
            <person name="Nguyen M."/>
            <person name="Overton-Larty E."/>
            <person name="Palmer S.A."/>
            <person name="Pearce A.V."/>
            <person name="Peck A.I."/>
            <person name="Pelan S."/>
            <person name="Phillimore B."/>
            <person name="Porter K."/>
            <person name="Rice C.M."/>
            <person name="Rogosin A."/>
            <person name="Ross M.T."/>
            <person name="Sarafidou T."/>
            <person name="Sehra H.K."/>
            <person name="Shownkeen R."/>
            <person name="Skuce C.D."/>
            <person name="Smith M."/>
            <person name="Standring L."/>
            <person name="Sycamore N."/>
            <person name="Tester J."/>
            <person name="Thorpe A."/>
            <person name="Torcasso W."/>
            <person name="Tracey A."/>
            <person name="Tromans A."/>
            <person name="Tsolas J."/>
            <person name="Wall M."/>
            <person name="Walsh J."/>
            <person name="Wang H."/>
            <person name="Weinstock K."/>
            <person name="West A.P."/>
            <person name="Willey D.L."/>
            <person name="Whitehead S.L."/>
            <person name="Wilming L."/>
            <person name="Wray P.W."/>
            <person name="Young L."/>
            <person name="Chen Y."/>
            <person name="Lovering R.C."/>
            <person name="Moschonas N.K."/>
            <person name="Siebert R."/>
            <person name="Fechtel K."/>
            <person name="Bentley D."/>
            <person name="Durbin R.M."/>
            <person name="Hubbard T."/>
            <person name="Doucette-Stamm L."/>
            <person name="Beck S."/>
            <person name="Smith D.R."/>
            <person name="Rogers J."/>
        </authorList>
    </citation>
    <scope>NUCLEOTIDE SEQUENCE [LARGE SCALE GENOMIC DNA]</scope>
</reference>
<reference key="6">
    <citation type="submission" date="2005-09" db="EMBL/GenBank/DDBJ databases">
        <authorList>
            <person name="Mural R.J."/>
            <person name="Istrail S."/>
            <person name="Sutton G.G."/>
            <person name="Florea L."/>
            <person name="Halpern A.L."/>
            <person name="Mobarry C.M."/>
            <person name="Lippert R."/>
            <person name="Walenz B."/>
            <person name="Shatkay H."/>
            <person name="Dew I."/>
            <person name="Miller J.R."/>
            <person name="Flanigan M.J."/>
            <person name="Edwards N.J."/>
            <person name="Bolanos R."/>
            <person name="Fasulo D."/>
            <person name="Halldorsson B.V."/>
            <person name="Hannenhalli S."/>
            <person name="Turner R."/>
            <person name="Yooseph S."/>
            <person name="Lu F."/>
            <person name="Nusskern D.R."/>
            <person name="Shue B.C."/>
            <person name="Zheng X.H."/>
            <person name="Zhong F."/>
            <person name="Delcher A.L."/>
            <person name="Huson D.H."/>
            <person name="Kravitz S.A."/>
            <person name="Mouchard L."/>
            <person name="Reinert K."/>
            <person name="Remington K.A."/>
            <person name="Clark A.G."/>
            <person name="Waterman M.S."/>
            <person name="Eichler E.E."/>
            <person name="Adams M.D."/>
            <person name="Hunkapiller M.W."/>
            <person name="Myers E.W."/>
            <person name="Venter J.C."/>
        </authorList>
    </citation>
    <scope>NUCLEOTIDE SEQUENCE [LARGE SCALE GENOMIC DNA]</scope>
</reference>
<reference key="7">
    <citation type="journal article" date="2001" name="DNA Res.">
        <title>Prediction of the coding sequences of unidentified human genes. XXII. The complete sequences of 50 new cDNA clones which code for large proteins.</title>
        <authorList>
            <person name="Nagase T."/>
            <person name="Kikuno R."/>
            <person name="Ohara O."/>
        </authorList>
    </citation>
    <scope>NUCLEOTIDE SEQUENCE [LARGE SCALE MRNA] OF 119-942 (ISOFORM 1)</scope>
    <scope>VARIANT SER-925</scope>
    <source>
        <tissue>Brain</tissue>
    </source>
</reference>
<reference key="8">
    <citation type="journal article" date="2007" name="BMC Genomics">
        <title>The full-ORF clone resource of the German cDNA consortium.</title>
        <authorList>
            <person name="Bechtel S."/>
            <person name="Rosenfelder H."/>
            <person name="Duda A."/>
            <person name="Schmidt C.P."/>
            <person name="Ernst U."/>
            <person name="Wellenreuther R."/>
            <person name="Mehrle A."/>
            <person name="Schuster C."/>
            <person name="Bahr A."/>
            <person name="Bloecker H."/>
            <person name="Heubner D."/>
            <person name="Hoerlein A."/>
            <person name="Michel G."/>
            <person name="Wedler H."/>
            <person name="Koehrer K."/>
            <person name="Ottenwaelder B."/>
            <person name="Poustka A."/>
            <person name="Wiemann S."/>
            <person name="Schupp I."/>
        </authorList>
    </citation>
    <scope>NUCLEOTIDE SEQUENCE [LARGE SCALE MRNA] OF 218-677 (ISOFORM 1)</scope>
    <scope>VARIANT PRO-570</scope>
    <source>
        <tissue>Amygdala</tissue>
    </source>
</reference>
<name>ITIH5_HUMAN</name>
<dbReference type="EMBL" id="AY238437">
    <property type="protein sequence ID" value="AAO49812.1"/>
    <property type="molecule type" value="mRNA"/>
</dbReference>
<dbReference type="EMBL" id="AY358426">
    <property type="protein sequence ID" value="AAQ88792.1"/>
    <property type="molecule type" value="mRNA"/>
</dbReference>
<dbReference type="EMBL" id="AK027375">
    <property type="protein sequence ID" value="BAB55070.1"/>
    <property type="molecule type" value="mRNA"/>
</dbReference>
<dbReference type="EMBL" id="AF318347">
    <property type="protein sequence ID" value="AAL55854.1"/>
    <property type="molecule type" value="mRNA"/>
</dbReference>
<dbReference type="EMBL" id="AL158044">
    <property type="protein sequence ID" value="CAI12953.1"/>
    <property type="status" value="ALT_FRAME"/>
    <property type="molecule type" value="Genomic_DNA"/>
</dbReference>
<dbReference type="EMBL" id="AL355374">
    <property type="protein sequence ID" value="CAI12953.1"/>
    <property type="status" value="JOINED"/>
    <property type="molecule type" value="Genomic_DNA"/>
</dbReference>
<dbReference type="EMBL" id="AL158044">
    <property type="protein sequence ID" value="CAI12955.1"/>
    <property type="status" value="ALT_FRAME"/>
    <property type="molecule type" value="Genomic_DNA"/>
</dbReference>
<dbReference type="EMBL" id="AL355374">
    <property type="protein sequence ID" value="CAI12955.1"/>
    <property type="status" value="JOINED"/>
    <property type="molecule type" value="Genomic_DNA"/>
</dbReference>
<dbReference type="EMBL" id="AL355374">
    <property type="protein sequence ID" value="CAI16360.1"/>
    <property type="status" value="ALT_FRAME"/>
    <property type="molecule type" value="Genomic_DNA"/>
</dbReference>
<dbReference type="EMBL" id="AL158044">
    <property type="protein sequence ID" value="CAI16360.1"/>
    <property type="status" value="JOINED"/>
    <property type="molecule type" value="Genomic_DNA"/>
</dbReference>
<dbReference type="EMBL" id="AL355374">
    <property type="protein sequence ID" value="CAI16362.1"/>
    <property type="molecule type" value="Genomic_DNA"/>
</dbReference>
<dbReference type="EMBL" id="AL355374">
    <property type="protein sequence ID" value="CAI16363.1"/>
    <property type="status" value="ALT_FRAME"/>
    <property type="molecule type" value="Genomic_DNA"/>
</dbReference>
<dbReference type="EMBL" id="AL158044">
    <property type="protein sequence ID" value="CAI16363.1"/>
    <property type="status" value="JOINED"/>
    <property type="molecule type" value="Genomic_DNA"/>
</dbReference>
<dbReference type="EMBL" id="CH471072">
    <property type="protein sequence ID" value="EAW86379.1"/>
    <property type="molecule type" value="Genomic_DNA"/>
</dbReference>
<dbReference type="EMBL" id="AB075833">
    <property type="protein sequence ID" value="BAB85539.1"/>
    <property type="molecule type" value="mRNA"/>
</dbReference>
<dbReference type="EMBL" id="CR627109">
    <property type="protein sequence ID" value="CAH10363.1"/>
    <property type="molecule type" value="mRNA"/>
</dbReference>
<dbReference type="CCDS" id="CCDS31139.2">
    <molecule id="Q86UX2-1"/>
</dbReference>
<dbReference type="CCDS" id="CCDS31140.2">
    <molecule id="Q86UX2-3"/>
</dbReference>
<dbReference type="RefSeq" id="NP_001001851.1">
    <property type="nucleotide sequence ID" value="NM_001001851.2"/>
</dbReference>
<dbReference type="RefSeq" id="NP_085046.5">
    <property type="nucleotide sequence ID" value="NM_030569.6"/>
</dbReference>
<dbReference type="SMR" id="Q86UX2"/>
<dbReference type="BioGRID" id="123294">
    <property type="interactions" value="16"/>
</dbReference>
<dbReference type="FunCoup" id="Q86UX2">
    <property type="interactions" value="32"/>
</dbReference>
<dbReference type="IntAct" id="Q86UX2">
    <property type="interactions" value="9"/>
</dbReference>
<dbReference type="MINT" id="Q86UX2"/>
<dbReference type="STRING" id="9606.ENSP00000380333"/>
<dbReference type="GlyConnect" id="1422">
    <property type="glycosylation" value="5 N-Linked glycans (1 site)"/>
</dbReference>
<dbReference type="GlyCosmos" id="Q86UX2">
    <property type="glycosylation" value="8 sites, 5 glycans"/>
</dbReference>
<dbReference type="GlyGen" id="Q86UX2">
    <property type="glycosylation" value="8 sites, 55 N-linked glycans (2 sites)"/>
</dbReference>
<dbReference type="iPTMnet" id="Q86UX2"/>
<dbReference type="PhosphoSitePlus" id="Q86UX2"/>
<dbReference type="BioMuta" id="ITIH5"/>
<dbReference type="DMDM" id="187609608"/>
<dbReference type="jPOST" id="Q86UX2"/>
<dbReference type="MassIVE" id="Q86UX2"/>
<dbReference type="PaxDb" id="9606-ENSP00000380333"/>
<dbReference type="PeptideAtlas" id="Q86UX2"/>
<dbReference type="ProteomicsDB" id="69925">
    <molecule id="Q86UX2-1"/>
</dbReference>
<dbReference type="ProteomicsDB" id="69926">
    <molecule id="Q86UX2-2"/>
</dbReference>
<dbReference type="ProteomicsDB" id="69927">
    <molecule id="Q86UX2-3"/>
</dbReference>
<dbReference type="ProteomicsDB" id="69928">
    <molecule id="Q86UX2-4"/>
</dbReference>
<dbReference type="DNASU" id="80760"/>
<dbReference type="GeneID" id="80760"/>
<dbReference type="KEGG" id="hsa:80760"/>
<dbReference type="AGR" id="HGNC:21449"/>
<dbReference type="CTD" id="80760"/>
<dbReference type="DisGeNET" id="80760"/>
<dbReference type="GeneCards" id="ITIH5"/>
<dbReference type="HGNC" id="HGNC:21449">
    <property type="gene designation" value="ITIH5"/>
</dbReference>
<dbReference type="MalaCards" id="ITIH5"/>
<dbReference type="MIM" id="609783">
    <property type="type" value="gene"/>
</dbReference>
<dbReference type="neXtProt" id="NX_Q86UX2"/>
<dbReference type="PharmGKB" id="PA134899668"/>
<dbReference type="eggNOG" id="ENOG502QPS2">
    <property type="taxonomic scope" value="Eukaryota"/>
</dbReference>
<dbReference type="InParanoid" id="Q86UX2"/>
<dbReference type="OrthoDB" id="299997at2759"/>
<dbReference type="PAN-GO" id="Q86UX2">
    <property type="GO annotations" value="0 GO annotations based on evolutionary models"/>
</dbReference>
<dbReference type="PhylomeDB" id="Q86UX2"/>
<dbReference type="TreeFam" id="TF328982"/>
<dbReference type="PathwayCommons" id="Q86UX2"/>
<dbReference type="SignaLink" id="Q86UX2"/>
<dbReference type="BioGRID-ORCS" id="80760">
    <property type="hits" value="3 hits in 313 CRISPR screens"/>
</dbReference>
<dbReference type="ChiTaRS" id="ITIH5">
    <property type="organism name" value="human"/>
</dbReference>
<dbReference type="GenomeRNAi" id="80760"/>
<dbReference type="Pharos" id="Q86UX2">
    <property type="development level" value="Tbio"/>
</dbReference>
<dbReference type="PRO" id="PR:Q86UX2"/>
<dbReference type="Proteomes" id="UP000005640">
    <property type="component" value="Unplaced"/>
</dbReference>
<dbReference type="RNAct" id="Q86UX2">
    <property type="molecule type" value="protein"/>
</dbReference>
<dbReference type="GO" id="GO:0062023">
    <property type="term" value="C:collagen-containing extracellular matrix"/>
    <property type="evidence" value="ECO:0007005"/>
    <property type="project" value="BHF-UCL"/>
</dbReference>
<dbReference type="GO" id="GO:0005576">
    <property type="term" value="C:extracellular region"/>
    <property type="evidence" value="ECO:0007669"/>
    <property type="project" value="UniProtKB-SubCell"/>
</dbReference>
<dbReference type="GO" id="GO:0004867">
    <property type="term" value="F:serine-type endopeptidase inhibitor activity"/>
    <property type="evidence" value="ECO:0007669"/>
    <property type="project" value="UniProtKB-KW"/>
</dbReference>
<dbReference type="GO" id="GO:0030212">
    <property type="term" value="P:hyaluronan metabolic process"/>
    <property type="evidence" value="ECO:0007669"/>
    <property type="project" value="InterPro"/>
</dbReference>
<dbReference type="CDD" id="cd01461">
    <property type="entry name" value="vWA_interalpha_trypsin_inhibitor"/>
    <property type="match status" value="1"/>
</dbReference>
<dbReference type="FunFam" id="3.40.50.410:FF:000013">
    <property type="entry name" value="inter-alpha-trypsin inhibitor heavy chain H2"/>
    <property type="match status" value="1"/>
</dbReference>
<dbReference type="Gene3D" id="3.40.50.410">
    <property type="entry name" value="von Willebrand factor, type A domain"/>
    <property type="match status" value="1"/>
</dbReference>
<dbReference type="InterPro" id="IPR010600">
    <property type="entry name" value="ITI_HC_C"/>
</dbReference>
<dbReference type="InterPro" id="IPR050934">
    <property type="entry name" value="ITIH"/>
</dbReference>
<dbReference type="InterPro" id="IPR013694">
    <property type="entry name" value="VIT"/>
</dbReference>
<dbReference type="InterPro" id="IPR002035">
    <property type="entry name" value="VWF_A"/>
</dbReference>
<dbReference type="InterPro" id="IPR036465">
    <property type="entry name" value="vWFA_dom_sf"/>
</dbReference>
<dbReference type="PANTHER" id="PTHR10338">
    <property type="entry name" value="INTER-ALPHA-TRYPSIN INHIBITOR HEAVY CHAIN FAMILY MEMBER"/>
    <property type="match status" value="1"/>
</dbReference>
<dbReference type="PANTHER" id="PTHR10338:SF62">
    <property type="entry name" value="INTER-ALPHA-TRYPSIN INHIBITOR HEAVY CHAIN H5"/>
    <property type="match status" value="1"/>
</dbReference>
<dbReference type="Pfam" id="PF06668">
    <property type="entry name" value="ITI_HC_C"/>
    <property type="match status" value="1"/>
</dbReference>
<dbReference type="Pfam" id="PF08487">
    <property type="entry name" value="VIT"/>
    <property type="match status" value="1"/>
</dbReference>
<dbReference type="Pfam" id="PF00092">
    <property type="entry name" value="VWA"/>
    <property type="match status" value="1"/>
</dbReference>
<dbReference type="SMART" id="SM00609">
    <property type="entry name" value="VIT"/>
    <property type="match status" value="1"/>
</dbReference>
<dbReference type="SMART" id="SM00327">
    <property type="entry name" value="VWA"/>
    <property type="match status" value="1"/>
</dbReference>
<dbReference type="SUPFAM" id="SSF53300">
    <property type="entry name" value="vWA-like"/>
    <property type="match status" value="1"/>
</dbReference>
<dbReference type="PROSITE" id="PS51468">
    <property type="entry name" value="VIT"/>
    <property type="match status" value="1"/>
</dbReference>
<dbReference type="PROSITE" id="PS50234">
    <property type="entry name" value="VWFA"/>
    <property type="match status" value="1"/>
</dbReference>
<proteinExistence type="evidence at protein level"/>
<accession>Q86UX2</accession>
<accession>Q5T664</accession>
<accession>Q5T665</accession>
<accession>Q5T666</accession>
<accession>Q6AI60</accession>
<accession>Q6UXB7</accession>
<accession>Q8TF48</accession>
<accession>Q8WYV2</accession>
<accession>Q96K70</accession>